<gene>
    <name type="primary">dus</name>
    <name type="ordered locus">SAS0059</name>
</gene>
<sequence>MKENFWSELPRPFFILAPMEDVTDIVFRHVVSEAARPDVFFTEFTNTESFCHPEGIHSVRGRLTFSEDEQPMVAHIWGDKPEQFRETSIQLAKMGFKGIDLNMGCPVANVAKKGKGSGLILRPDVAAEIIQATKAGGLPVSVKTRLGYYEIDEWKDWLKHVFEQDIANLSIHLRTRKEMSKVDAHWELIEAIKNLRDEIAPNTLLTINGDIPDRKTGLELAEKYGIDGVMIGRGIFHNPFAFEKEPREHTSKELLDLLRLHLSLFNKYEKDEIRQFKSLRRFFKIYVRGIRGASELRHQLMNTQSIAEARALLDEFEAQMDEDVKIEL</sequence>
<comment type="function">
    <text evidence="1">Catalyzes the synthesis of 5,6-dihydrouridine (D), a modified base found in the D-loop of most tRNAs, via the reduction of the C5-C6 double bond in target uridines.</text>
</comment>
<comment type="catalytic activity">
    <reaction evidence="1">
        <text>a 5,6-dihydrouridine in tRNA + NAD(+) = a uridine in tRNA + NADH + H(+)</text>
        <dbReference type="Rhea" id="RHEA:54452"/>
        <dbReference type="Rhea" id="RHEA-COMP:13339"/>
        <dbReference type="Rhea" id="RHEA-COMP:13887"/>
        <dbReference type="ChEBI" id="CHEBI:15378"/>
        <dbReference type="ChEBI" id="CHEBI:57540"/>
        <dbReference type="ChEBI" id="CHEBI:57945"/>
        <dbReference type="ChEBI" id="CHEBI:65315"/>
        <dbReference type="ChEBI" id="CHEBI:74443"/>
    </reaction>
</comment>
<comment type="catalytic activity">
    <reaction evidence="1">
        <text>a 5,6-dihydrouridine in tRNA + NADP(+) = a uridine in tRNA + NADPH + H(+)</text>
        <dbReference type="Rhea" id="RHEA:23624"/>
        <dbReference type="Rhea" id="RHEA-COMP:13339"/>
        <dbReference type="Rhea" id="RHEA-COMP:13887"/>
        <dbReference type="ChEBI" id="CHEBI:15378"/>
        <dbReference type="ChEBI" id="CHEBI:57783"/>
        <dbReference type="ChEBI" id="CHEBI:58349"/>
        <dbReference type="ChEBI" id="CHEBI:65315"/>
        <dbReference type="ChEBI" id="CHEBI:74443"/>
    </reaction>
</comment>
<comment type="cofactor">
    <cofactor evidence="1">
        <name>FMN</name>
        <dbReference type="ChEBI" id="CHEBI:58210"/>
    </cofactor>
</comment>
<comment type="similarity">
    <text evidence="3">Belongs to the Dus family.</text>
</comment>
<proteinExistence type="inferred from homology"/>
<reference key="1">
    <citation type="journal article" date="2004" name="Proc. Natl. Acad. Sci. U.S.A.">
        <title>Complete genomes of two clinical Staphylococcus aureus strains: evidence for the rapid evolution of virulence and drug resistance.</title>
        <authorList>
            <person name="Holden M.T.G."/>
            <person name="Feil E.J."/>
            <person name="Lindsay J.A."/>
            <person name="Peacock S.J."/>
            <person name="Day N.P.J."/>
            <person name="Enright M.C."/>
            <person name="Foster T.J."/>
            <person name="Moore C.E."/>
            <person name="Hurst L."/>
            <person name="Atkin R."/>
            <person name="Barron A."/>
            <person name="Bason N."/>
            <person name="Bentley S.D."/>
            <person name="Chillingworth C."/>
            <person name="Chillingworth T."/>
            <person name="Churcher C."/>
            <person name="Clark L."/>
            <person name="Corton C."/>
            <person name="Cronin A."/>
            <person name="Doggett J."/>
            <person name="Dowd L."/>
            <person name="Feltwell T."/>
            <person name="Hance Z."/>
            <person name="Harris B."/>
            <person name="Hauser H."/>
            <person name="Holroyd S."/>
            <person name="Jagels K."/>
            <person name="James K.D."/>
            <person name="Lennard N."/>
            <person name="Line A."/>
            <person name="Mayes R."/>
            <person name="Moule S."/>
            <person name="Mungall K."/>
            <person name="Ormond D."/>
            <person name="Quail M.A."/>
            <person name="Rabbinowitsch E."/>
            <person name="Rutherford K.M."/>
            <person name="Sanders M."/>
            <person name="Sharp S."/>
            <person name="Simmonds M."/>
            <person name="Stevens K."/>
            <person name="Whitehead S."/>
            <person name="Barrell B.G."/>
            <person name="Spratt B.G."/>
            <person name="Parkhill J."/>
        </authorList>
    </citation>
    <scope>NUCLEOTIDE SEQUENCE [LARGE SCALE GENOMIC DNA]</scope>
    <source>
        <strain>MSSA476</strain>
    </source>
</reference>
<dbReference type="EC" id="1.3.1.-"/>
<dbReference type="EMBL" id="BX571857">
    <property type="protein sequence ID" value="CAG41827.1"/>
    <property type="molecule type" value="Genomic_DNA"/>
</dbReference>
<dbReference type="RefSeq" id="WP_000662031.1">
    <property type="nucleotide sequence ID" value="NC_002953.3"/>
</dbReference>
<dbReference type="SMR" id="Q6GD38"/>
<dbReference type="KEGG" id="sas:SAS0059"/>
<dbReference type="HOGENOM" id="CLU_013299_0_3_9"/>
<dbReference type="GO" id="GO:0050660">
    <property type="term" value="F:flavin adenine dinucleotide binding"/>
    <property type="evidence" value="ECO:0007669"/>
    <property type="project" value="InterPro"/>
</dbReference>
<dbReference type="GO" id="GO:0000049">
    <property type="term" value="F:tRNA binding"/>
    <property type="evidence" value="ECO:0007669"/>
    <property type="project" value="UniProtKB-KW"/>
</dbReference>
<dbReference type="GO" id="GO:0017150">
    <property type="term" value="F:tRNA dihydrouridine synthase activity"/>
    <property type="evidence" value="ECO:0007669"/>
    <property type="project" value="InterPro"/>
</dbReference>
<dbReference type="CDD" id="cd02801">
    <property type="entry name" value="DUS_like_FMN"/>
    <property type="match status" value="1"/>
</dbReference>
<dbReference type="Gene3D" id="3.20.20.70">
    <property type="entry name" value="Aldolase class I"/>
    <property type="match status" value="1"/>
</dbReference>
<dbReference type="Gene3D" id="1.10.1200.80">
    <property type="entry name" value="Putative flavin oxidoreducatase, domain 2"/>
    <property type="match status" value="1"/>
</dbReference>
<dbReference type="InterPro" id="IPR013785">
    <property type="entry name" value="Aldolase_TIM"/>
</dbReference>
<dbReference type="InterPro" id="IPR035587">
    <property type="entry name" value="DUS-like_FMN-bd"/>
</dbReference>
<dbReference type="InterPro" id="IPR001269">
    <property type="entry name" value="DUS_fam"/>
</dbReference>
<dbReference type="InterPro" id="IPR024036">
    <property type="entry name" value="tRNA-dHydroUridine_Synthase_C"/>
</dbReference>
<dbReference type="InterPro" id="IPR018517">
    <property type="entry name" value="tRNA_hU_synthase_CS"/>
</dbReference>
<dbReference type="PANTHER" id="PTHR11082:SF25">
    <property type="entry name" value="DUS-LIKE FMN-BINDING DOMAIN-CONTAINING PROTEIN"/>
    <property type="match status" value="1"/>
</dbReference>
<dbReference type="PANTHER" id="PTHR11082">
    <property type="entry name" value="TRNA-DIHYDROURIDINE SYNTHASE"/>
    <property type="match status" value="1"/>
</dbReference>
<dbReference type="Pfam" id="PF01207">
    <property type="entry name" value="Dus"/>
    <property type="match status" value="1"/>
</dbReference>
<dbReference type="PIRSF" id="PIRSF006621">
    <property type="entry name" value="Dus"/>
    <property type="match status" value="1"/>
</dbReference>
<dbReference type="SUPFAM" id="SSF51395">
    <property type="entry name" value="FMN-linked oxidoreductases"/>
    <property type="match status" value="1"/>
</dbReference>
<dbReference type="PROSITE" id="PS01136">
    <property type="entry name" value="UPF0034"/>
    <property type="match status" value="1"/>
</dbReference>
<accession>Q6GD38</accession>
<organism>
    <name type="scientific">Staphylococcus aureus (strain MSSA476)</name>
    <dbReference type="NCBI Taxonomy" id="282459"/>
    <lineage>
        <taxon>Bacteria</taxon>
        <taxon>Bacillati</taxon>
        <taxon>Bacillota</taxon>
        <taxon>Bacilli</taxon>
        <taxon>Bacillales</taxon>
        <taxon>Staphylococcaceae</taxon>
        <taxon>Staphylococcus</taxon>
    </lineage>
</organism>
<evidence type="ECO:0000250" key="1">
    <source>
        <dbReference type="UniProtKB" id="P33371"/>
    </source>
</evidence>
<evidence type="ECO:0000250" key="2">
    <source>
        <dbReference type="UniProtKB" id="Q5SMC7"/>
    </source>
</evidence>
<evidence type="ECO:0000305" key="3"/>
<feature type="chain" id="PRO_0000162146" description="Probable tRNA-dihydrouridine synthase">
    <location>
        <begin position="1"/>
        <end position="328"/>
    </location>
</feature>
<feature type="active site" description="Proton donor" evidence="2">
    <location>
        <position position="105"/>
    </location>
</feature>
<feature type="binding site" evidence="1">
    <location>
        <begin position="18"/>
        <end position="20"/>
    </location>
    <ligand>
        <name>FMN</name>
        <dbReference type="ChEBI" id="CHEBI:58210"/>
    </ligand>
</feature>
<feature type="binding site" evidence="1">
    <location>
        <position position="143"/>
    </location>
    <ligand>
        <name>FMN</name>
        <dbReference type="ChEBI" id="CHEBI:58210"/>
    </ligand>
</feature>
<feature type="binding site" evidence="1">
    <location>
        <begin position="208"/>
        <end position="210"/>
    </location>
    <ligand>
        <name>FMN</name>
        <dbReference type="ChEBI" id="CHEBI:58210"/>
    </ligand>
</feature>
<feature type="binding site" evidence="1">
    <location>
        <begin position="232"/>
        <end position="233"/>
    </location>
    <ligand>
        <name>FMN</name>
        <dbReference type="ChEBI" id="CHEBI:58210"/>
    </ligand>
</feature>
<keyword id="KW-0285">Flavoprotein</keyword>
<keyword id="KW-0288">FMN</keyword>
<keyword id="KW-0521">NADP</keyword>
<keyword id="KW-0560">Oxidoreductase</keyword>
<keyword id="KW-0694">RNA-binding</keyword>
<keyword id="KW-0819">tRNA processing</keyword>
<keyword id="KW-0820">tRNA-binding</keyword>
<protein>
    <recommendedName>
        <fullName>Probable tRNA-dihydrouridine synthase</fullName>
        <ecNumber>1.3.1.-</ecNumber>
    </recommendedName>
</protein>
<name>DUS_STAAS</name>